<comment type="catalytic activity">
    <reaction evidence="1">
        <text>CMP + ATP = CDP + ADP</text>
        <dbReference type="Rhea" id="RHEA:11600"/>
        <dbReference type="ChEBI" id="CHEBI:30616"/>
        <dbReference type="ChEBI" id="CHEBI:58069"/>
        <dbReference type="ChEBI" id="CHEBI:60377"/>
        <dbReference type="ChEBI" id="CHEBI:456216"/>
        <dbReference type="EC" id="2.7.4.25"/>
    </reaction>
</comment>
<comment type="catalytic activity">
    <reaction evidence="1">
        <text>dCMP + ATP = dCDP + ADP</text>
        <dbReference type="Rhea" id="RHEA:25094"/>
        <dbReference type="ChEBI" id="CHEBI:30616"/>
        <dbReference type="ChEBI" id="CHEBI:57566"/>
        <dbReference type="ChEBI" id="CHEBI:58593"/>
        <dbReference type="ChEBI" id="CHEBI:456216"/>
        <dbReference type="EC" id="2.7.4.25"/>
    </reaction>
</comment>
<comment type="subcellular location">
    <subcellularLocation>
        <location evidence="1">Cytoplasm</location>
    </subcellularLocation>
</comment>
<comment type="similarity">
    <text evidence="1">Belongs to the cytidylate kinase family. Type 1 subfamily.</text>
</comment>
<reference key="1">
    <citation type="submission" date="2007-04" db="EMBL/GenBank/DDBJ databases">
        <title>Genome sequence of the thermophilic hydrogen-producing bacterium Caldicellulosiruptor saccharolyticus DSM 8903.</title>
        <authorList>
            <person name="Copeland A."/>
            <person name="Lucas S."/>
            <person name="Lapidus A."/>
            <person name="Barry K."/>
            <person name="Detter J.C."/>
            <person name="Glavina del Rio T."/>
            <person name="Hammon N."/>
            <person name="Israni S."/>
            <person name="Dalin E."/>
            <person name="Tice H."/>
            <person name="Pitluck S."/>
            <person name="Kiss H."/>
            <person name="Brettin T."/>
            <person name="Bruce D."/>
            <person name="Han C."/>
            <person name="Schmutz J."/>
            <person name="Larimer F."/>
            <person name="Land M."/>
            <person name="Hauser L."/>
            <person name="Kyrpides N."/>
            <person name="Lykidis A."/>
            <person name="van de Werken H.J.G."/>
            <person name="Verhaart M.R.A."/>
            <person name="VanFossen A.L."/>
            <person name="Lewis D.L."/>
            <person name="Nichols J.D."/>
            <person name="Goorissen H.P."/>
            <person name="van Niel E.W.J."/>
            <person name="Stams F.J.M."/>
            <person name="Willquist K.U."/>
            <person name="Ward D.E."/>
            <person name="van der Oost J."/>
            <person name="Kelly R.M."/>
            <person name="Kengen S.M.W."/>
            <person name="Richardson P."/>
        </authorList>
    </citation>
    <scope>NUCLEOTIDE SEQUENCE [LARGE SCALE GENOMIC DNA]</scope>
    <source>
        <strain>ATCC 43494 / DSM 8903 / Tp8T 6331</strain>
    </source>
</reference>
<gene>
    <name evidence="1" type="primary">cmk</name>
    <name type="ordered locus">Csac_1889</name>
</gene>
<feature type="chain" id="PRO_1000048205" description="Cytidylate kinase">
    <location>
        <begin position="1"/>
        <end position="226"/>
    </location>
</feature>
<feature type="binding site" evidence="1">
    <location>
        <begin position="10"/>
        <end position="18"/>
    </location>
    <ligand>
        <name>ATP</name>
        <dbReference type="ChEBI" id="CHEBI:30616"/>
    </ligand>
</feature>
<sequence length="226" mass="25378">MKKINIAIDGPAGAGKSTISKLLAKKLGYIHIDTGAMYRAIGLKVLNSNIKSNEVEKILEVLDNTDIQIKIVAGSQLVLLDGEDVTEKIRQPSVSMYASDVSKIKEVREKLVKIQQDLAKQKGVIMDGRDIGTYVLPDAELKIFLTATAEERAKRRFLELKEKGYEVDYYQLLDEIKQRDLNDMTRELAPLRVAEDAIVIDSTNLTIEEVLQKVLELFYKVIGNEV</sequence>
<organism>
    <name type="scientific">Caldicellulosiruptor saccharolyticus (strain ATCC 43494 / DSM 8903 / Tp8T 6331)</name>
    <dbReference type="NCBI Taxonomy" id="351627"/>
    <lineage>
        <taxon>Bacteria</taxon>
        <taxon>Bacillati</taxon>
        <taxon>Bacillota</taxon>
        <taxon>Bacillota incertae sedis</taxon>
        <taxon>Caldicellulosiruptorales</taxon>
        <taxon>Caldicellulosiruptoraceae</taxon>
        <taxon>Caldicellulosiruptor</taxon>
    </lineage>
</organism>
<dbReference type="EC" id="2.7.4.25" evidence="1"/>
<dbReference type="EMBL" id="CP000679">
    <property type="protein sequence ID" value="ABP67474.1"/>
    <property type="molecule type" value="Genomic_DNA"/>
</dbReference>
<dbReference type="RefSeq" id="WP_011917409.1">
    <property type="nucleotide sequence ID" value="NC_009437.1"/>
</dbReference>
<dbReference type="SMR" id="A4XKN9"/>
<dbReference type="STRING" id="351627.Csac_1889"/>
<dbReference type="KEGG" id="csc:Csac_1889"/>
<dbReference type="eggNOG" id="COG0283">
    <property type="taxonomic scope" value="Bacteria"/>
</dbReference>
<dbReference type="HOGENOM" id="CLU_079959_0_2_9"/>
<dbReference type="OrthoDB" id="9807434at2"/>
<dbReference type="Proteomes" id="UP000000256">
    <property type="component" value="Chromosome"/>
</dbReference>
<dbReference type="GO" id="GO:0005829">
    <property type="term" value="C:cytosol"/>
    <property type="evidence" value="ECO:0007669"/>
    <property type="project" value="TreeGrafter"/>
</dbReference>
<dbReference type="GO" id="GO:0005524">
    <property type="term" value="F:ATP binding"/>
    <property type="evidence" value="ECO:0007669"/>
    <property type="project" value="UniProtKB-UniRule"/>
</dbReference>
<dbReference type="GO" id="GO:0036430">
    <property type="term" value="F:CMP kinase activity"/>
    <property type="evidence" value="ECO:0007669"/>
    <property type="project" value="RHEA"/>
</dbReference>
<dbReference type="GO" id="GO:0036431">
    <property type="term" value="F:dCMP kinase activity"/>
    <property type="evidence" value="ECO:0007669"/>
    <property type="project" value="RHEA"/>
</dbReference>
<dbReference type="GO" id="GO:0015949">
    <property type="term" value="P:nucleobase-containing small molecule interconversion"/>
    <property type="evidence" value="ECO:0007669"/>
    <property type="project" value="TreeGrafter"/>
</dbReference>
<dbReference type="GO" id="GO:0006220">
    <property type="term" value="P:pyrimidine nucleotide metabolic process"/>
    <property type="evidence" value="ECO:0007669"/>
    <property type="project" value="UniProtKB-UniRule"/>
</dbReference>
<dbReference type="CDD" id="cd02020">
    <property type="entry name" value="CMPK"/>
    <property type="match status" value="1"/>
</dbReference>
<dbReference type="Gene3D" id="3.40.50.300">
    <property type="entry name" value="P-loop containing nucleotide triphosphate hydrolases"/>
    <property type="match status" value="1"/>
</dbReference>
<dbReference type="HAMAP" id="MF_00238">
    <property type="entry name" value="Cytidyl_kinase_type1"/>
    <property type="match status" value="1"/>
</dbReference>
<dbReference type="InterPro" id="IPR003136">
    <property type="entry name" value="Cytidylate_kin"/>
</dbReference>
<dbReference type="InterPro" id="IPR011994">
    <property type="entry name" value="Cytidylate_kinase_dom"/>
</dbReference>
<dbReference type="InterPro" id="IPR027417">
    <property type="entry name" value="P-loop_NTPase"/>
</dbReference>
<dbReference type="NCBIfam" id="TIGR00017">
    <property type="entry name" value="cmk"/>
    <property type="match status" value="1"/>
</dbReference>
<dbReference type="PANTHER" id="PTHR21299:SF2">
    <property type="entry name" value="CYTIDYLATE KINASE"/>
    <property type="match status" value="1"/>
</dbReference>
<dbReference type="PANTHER" id="PTHR21299">
    <property type="entry name" value="CYTIDYLATE KINASE/PANTOATE-BETA-ALANINE LIGASE"/>
    <property type="match status" value="1"/>
</dbReference>
<dbReference type="Pfam" id="PF02224">
    <property type="entry name" value="Cytidylate_kin"/>
    <property type="match status" value="1"/>
</dbReference>
<dbReference type="SUPFAM" id="SSF52540">
    <property type="entry name" value="P-loop containing nucleoside triphosphate hydrolases"/>
    <property type="match status" value="1"/>
</dbReference>
<protein>
    <recommendedName>
        <fullName evidence="1">Cytidylate kinase</fullName>
        <shortName evidence="1">CK</shortName>
        <ecNumber evidence="1">2.7.4.25</ecNumber>
    </recommendedName>
    <alternativeName>
        <fullName evidence="1">Cytidine monophosphate kinase</fullName>
        <shortName evidence="1">CMP kinase</shortName>
    </alternativeName>
</protein>
<proteinExistence type="inferred from homology"/>
<evidence type="ECO:0000255" key="1">
    <source>
        <dbReference type="HAMAP-Rule" id="MF_00238"/>
    </source>
</evidence>
<name>KCY_CALS8</name>
<keyword id="KW-0067">ATP-binding</keyword>
<keyword id="KW-0963">Cytoplasm</keyword>
<keyword id="KW-0418">Kinase</keyword>
<keyword id="KW-0547">Nucleotide-binding</keyword>
<keyword id="KW-0808">Transferase</keyword>
<accession>A4XKN9</accession>